<comment type="function">
    <text evidence="1 4 5">Transcription factor that acts as a transcriptional activator (PubMed:24886874, PubMed:26543203). Binds cooperatively with POU3F2/BRN2 or POU3F1/OCT6 to gene promoters, which enhances transcriptional activation (By similarity). Acts as a transcriptional activator of TEAD2 by binding to its gene promoter and first intron (By similarity). Plays a redundant role with SOX4 and SOX12 in cell survival of developing tissues such as the neural tube, branchial arches and somites, thereby contributing to organogenesis (By similarity).</text>
</comment>
<comment type="subcellular location">
    <subcellularLocation>
        <location evidence="2 4 11">Nucleus</location>
    </subcellularLocation>
</comment>
<comment type="tissue specificity">
    <text evidence="4">Expressed primarily in the brain and heart, with low expression in the kidney, pancreas and muscle.</text>
</comment>
<comment type="developmental stage">
    <text evidence="4 12">Expressed primarily in the fetal brain, with low expression in the lung, and kidney at 6-7 weeks dpc (PubMed:24886874, PubMed:8666406). Weak expression in the fetal heart and muscle (PubMed:24886874).</text>
</comment>
<comment type="disease" evidence="4 5 6 7 8 9 10 11">
    <disease id="DI-04132">
        <name>Intellectual developmental disorder with microcephaly and with or without ocular malformations or hypogonadotropic hypogonadism</name>
        <acronym>IDDMOH</acronym>
        <description>An autosomal dominant disorder characterized by developmental delay, impaired intellectual development and microcephaly. Affected individuals may also have oculomotor apraxia, ocular malformations including coloboma, lens abnormalities and microphthalmia, and hypogonadotropic hypogonadism. Some patients may have finger clinodactyly and hypoplastic distal phalanges with nail hypoplasia, especially of the fifth digits.</description>
        <dbReference type="MIM" id="615866"/>
    </disease>
    <text>The disease is caused by variants affecting the gene represented in this entry.</text>
</comment>
<comment type="online information" name="Atlas of Genetics and Cytogenetics in Oncology and Haematology">
    <link uri="https://atlasgeneticsoncology.org/gene/42357/SOX11"/>
</comment>
<organism>
    <name type="scientific">Homo sapiens</name>
    <name type="common">Human</name>
    <dbReference type="NCBI Taxonomy" id="9606"/>
    <lineage>
        <taxon>Eukaryota</taxon>
        <taxon>Metazoa</taxon>
        <taxon>Chordata</taxon>
        <taxon>Craniata</taxon>
        <taxon>Vertebrata</taxon>
        <taxon>Euteleostomi</taxon>
        <taxon>Mammalia</taxon>
        <taxon>Eutheria</taxon>
        <taxon>Euarchontoglires</taxon>
        <taxon>Primates</taxon>
        <taxon>Haplorrhini</taxon>
        <taxon>Catarrhini</taxon>
        <taxon>Hominidae</taxon>
        <taxon>Homo</taxon>
    </lineage>
</organism>
<name>SOX11_HUMAN</name>
<protein>
    <recommendedName>
        <fullName>Transcription factor SOX-11</fullName>
    </recommendedName>
</protein>
<gene>
    <name type="primary">SOX11</name>
</gene>
<accession>P35716</accession>
<accession>Q4ZFV8</accession>
<feature type="chain" id="PRO_0000048750" description="Transcription factor SOX-11">
    <location>
        <begin position="1"/>
        <end position="441"/>
    </location>
</feature>
<feature type="DNA-binding region" description="HMG box" evidence="2">
    <location>
        <begin position="49"/>
        <end position="117"/>
    </location>
</feature>
<feature type="region of interest" description="Disordered" evidence="3">
    <location>
        <begin position="1"/>
        <end position="21"/>
    </location>
</feature>
<feature type="region of interest" description="Disordered" evidence="3">
    <location>
        <begin position="116"/>
        <end position="216"/>
    </location>
</feature>
<feature type="region of interest" description="Disordered" evidence="3">
    <location>
        <begin position="240"/>
        <end position="292"/>
    </location>
</feature>
<feature type="region of interest" description="Disordered" evidence="3">
    <location>
        <begin position="319"/>
        <end position="359"/>
    </location>
</feature>
<feature type="region of interest" description="Required for transcriptional activation activity and synergistic coactivation of transcriptional activity with POU3F2" evidence="1">
    <location>
        <begin position="409"/>
        <end position="441"/>
    </location>
</feature>
<feature type="compositionally biased region" description="Gly residues" evidence="3">
    <location>
        <begin position="143"/>
        <end position="156"/>
    </location>
</feature>
<feature type="compositionally biased region" description="Low complexity" evidence="3">
    <location>
        <begin position="170"/>
        <end position="186"/>
    </location>
</feature>
<feature type="compositionally biased region" description="Low complexity" evidence="3">
    <location>
        <begin position="252"/>
        <end position="267"/>
    </location>
</feature>
<feature type="compositionally biased region" description="Low complexity" evidence="3">
    <location>
        <begin position="328"/>
        <end position="355"/>
    </location>
</feature>
<feature type="modified residue" description="Phosphoserine" evidence="13">
    <location>
        <position position="206"/>
    </location>
</feature>
<feature type="sequence variant" id="VAR_088026" description="In IDDMOH." evidence="5">
    <location>
        <begin position="29"/>
        <end position="441"/>
    </location>
</feature>
<feature type="sequence variant" id="VAR_088027" description="In IDDMOH; uncertain significance." evidence="8">
    <original>G</original>
    <variation>S</variation>
    <location>
        <position position="47"/>
    </location>
</feature>
<feature type="sequence variant" id="VAR_088028" description="In IDDMOH; uncertain significance; dbSNP:rs2103276319." evidence="9">
    <original>H</original>
    <variation>D</variation>
    <location>
        <position position="48"/>
    </location>
</feature>
<feature type="sequence variant" id="VAR_088029" description="In IDDMOH." evidence="7">
    <original>I</original>
    <variation>N</variation>
    <location>
        <position position="49"/>
    </location>
</feature>
<feature type="sequence variant" id="VAR_088030" description="In IDDMOH; decreased function in positive regulation of DNA-templated transcription; compared to the wild-type, the mutant induces a severely reduced GDF5 promoter activation using an in vitro reporter system." evidence="5">
    <original>K</original>
    <variation>N</variation>
    <location>
        <position position="50"/>
    </location>
</feature>
<feature type="sequence variant" id="VAR_088031" description="In IDDMOH." evidence="9">
    <original>K</original>
    <variation>Q</variation>
    <location>
        <position position="50"/>
    </location>
</feature>
<feature type="sequence variant" id="VAR_088032" description="In IDDMOH." evidence="9">
    <original>R</original>
    <variation>G</variation>
    <location>
        <position position="51"/>
    </location>
</feature>
<feature type="sequence variant" id="VAR_088033" description="In IDDMOH." evidence="9">
    <original>R</original>
    <variation>L</variation>
    <location>
        <position position="51"/>
    </location>
</feature>
<feature type="sequence variant" id="VAR_088034" description="In IDDMOH; dbSNP:rs2103276330." evidence="9">
    <original>R</original>
    <variation>Q</variation>
    <location>
        <position position="51"/>
    </location>
</feature>
<feature type="sequence variant" id="VAR_088035" description="In IDDMOH; dbSNP:rs2103276324." evidence="9">
    <original>R</original>
    <variation>W</variation>
    <location>
        <position position="51"/>
    </location>
</feature>
<feature type="sequence variant" id="VAR_088036" description="In IDDMOH." evidence="9">
    <original>P</original>
    <variation>L</variation>
    <location>
        <position position="52"/>
    </location>
</feature>
<feature type="sequence variant" id="VAR_088037" description="In IDDMOH." evidence="9">
    <original>M</original>
    <variation>I</variation>
    <location>
        <position position="53"/>
    </location>
</feature>
<feature type="sequence variant" id="VAR_088038" description="In IDDMOH." evidence="9">
    <original>M</original>
    <variation>R</variation>
    <location>
        <position position="53"/>
    </location>
</feature>
<feature type="sequence variant" id="VAR_088039" description="In IDDMOH." evidence="9">
    <original>M</original>
    <variation>V</variation>
    <location>
        <position position="53"/>
    </location>
</feature>
<feature type="sequence variant" id="VAR_088040" description="In IDDMOH." evidence="9">
    <original>A</original>
    <variation>T</variation>
    <location>
        <position position="55"/>
    </location>
</feature>
<feature type="sequence variant" id="VAR_088041" description="In IDDMOH; dbSNP:rs2103276338." evidence="9">
    <original>F</original>
    <variation>L</variation>
    <location>
        <position position="56"/>
    </location>
</feature>
<feature type="sequence variant" id="VAR_088042" description="In IDDMOH; dbSNP:rs2103276340." evidence="9">
    <original>M</original>
    <variation>T</variation>
    <location>
        <position position="57"/>
    </location>
</feature>
<feature type="sequence variant" id="VAR_088043" description="In IDDMOH." evidence="9">
    <location>
        <begin position="59"/>
        <end position="441"/>
    </location>
</feature>
<feature type="sequence variant" id="VAR_071461" description="In IDDMOH; decreases transcriptional activity; dbSNP:rs587777480." evidence="4">
    <original>S</original>
    <variation>P</variation>
    <location>
        <position position="60"/>
    </location>
</feature>
<feature type="sequence variant" id="VAR_088044" description="In IDDMOH." evidence="9">
    <original>R</original>
    <variation>C</variation>
    <location>
        <position position="64"/>
    </location>
</feature>
<feature type="sequence variant" id="VAR_088045" description="In IDDMOH." evidence="9">
    <original>R</original>
    <variation>L</variation>
    <location>
        <position position="64"/>
    </location>
</feature>
<feature type="sequence variant" id="VAR_088046" description="In IDDMOH." evidence="9">
    <original>R</original>
    <variation>P</variation>
    <location>
        <position position="64"/>
    </location>
</feature>
<feature type="sequence variant" id="VAR_088047" description="In IDDMOH." evidence="9">
    <original>R</original>
    <variation>S</variation>
    <location>
        <position position="64"/>
    </location>
</feature>
<feature type="sequence variant" id="VAR_088048" description="In IDDMOH." evidence="9">
    <original>H</original>
    <variation>D</variation>
    <location>
        <position position="75"/>
    </location>
</feature>
<feature type="sequence variant" id="VAR_088049" description="In IDDMOH; dbSNP:rs1665660543." evidence="10">
    <original>N</original>
    <variation>D</variation>
    <location>
        <position position="76"/>
    </location>
</feature>
<feature type="sequence variant" id="VAR_088050" description="In IDDMOH." evidence="9">
    <original>G</original>
    <variation>S</variation>
    <location>
        <position position="84"/>
    </location>
</feature>
<feature type="sequence variant" id="VAR_088051" description="In IDDMOH." evidence="9">
    <original>W</original>
    <variation>R</variation>
    <location>
        <position position="87"/>
    </location>
</feature>
<feature type="sequence variant" id="VAR_088052" description="In IDDMOH; uncertain significance." evidence="9">
    <original>F</original>
    <variation>L</variation>
    <location>
        <position position="98"/>
    </location>
</feature>
<feature type="sequence variant" id="VAR_088053" description="In IDDMOH; dbSNP:rs1064794628." evidence="10">
    <original>R</original>
    <variation>P</variation>
    <location>
        <position position="100"/>
    </location>
</feature>
<feature type="sequence variant" id="VAR_088054" description="In IDDMOH; dbSNP:rs1665661372." evidence="6">
    <original>A</original>
    <variation>V</variation>
    <location>
        <position position="102"/>
    </location>
</feature>
<feature type="sequence variant" id="VAR_088055" description="In IDDMOH." evidence="9">
    <original>R</original>
    <variation>P</variation>
    <location>
        <position position="106"/>
    </location>
</feature>
<feature type="sequence variant" id="VAR_088056" description="In IDDMOH." evidence="9">
    <original>H</original>
    <variation>P</variation>
    <location>
        <position position="109"/>
    </location>
</feature>
<feature type="sequence variant" id="VAR_088057" description="In IDDMOH; decreased function in positive regulation of DNA-templated transcription; compared to the wild-type, the mutant induces reduced GDF5 promoter activation using an in vitro reporter system; no effect on nuclear localization." evidence="11">
    <original>Y</original>
    <variation>H</variation>
    <location>
        <position position="113"/>
    </location>
</feature>
<feature type="sequence variant" id="VAR_071462" description="In IDDMOH; decreases transcriptional activity; dbSNP:rs587777479." evidence="4">
    <original>Y</original>
    <variation>C</variation>
    <location>
        <position position="116"/>
    </location>
</feature>
<feature type="sequence variant" id="VAR_088058" description="In IDDMOH; decreased function in positive regulation of DNA-templated transcription; compared to the wild-type, the mutant induces a reduced GDF5 promoter activation using an in vitro reporter system." evidence="5">
    <original>P</original>
    <variation>H</variation>
    <location>
        <position position="120"/>
    </location>
</feature>
<feature type="sequence variant" id="VAR_088059" description="In IDDMOH; uncertain significance; no effect on nuclear localization." evidence="11">
    <original>A</original>
    <variation>G</variation>
    <location>
        <position position="142"/>
    </location>
</feature>
<feature type="sequence variant" id="VAR_088060" description="In IDDMOH; uncertain significance." evidence="9">
    <original>A</original>
    <variation>E</variation>
    <location>
        <position position="176"/>
    </location>
</feature>
<feature type="sequence variant" id="VAR_088061" description="In IDDMOH." evidence="9">
    <location>
        <begin position="234"/>
        <end position="441"/>
    </location>
</feature>
<feature type="sequence variant" id="VAR_088062" description="In IDDMOH." evidence="11">
    <location>
        <begin position="274"/>
        <end position="441"/>
    </location>
</feature>
<feature type="helix" evidence="14">
    <location>
        <begin position="55"/>
        <end position="70"/>
    </location>
</feature>
<feature type="helix" evidence="14">
    <location>
        <begin position="76"/>
        <end position="89"/>
    </location>
</feature>
<feature type="helix" evidence="14">
    <location>
        <begin position="93"/>
        <end position="95"/>
    </location>
</feature>
<feature type="helix" evidence="14">
    <location>
        <begin position="96"/>
        <end position="112"/>
    </location>
</feature>
<keyword id="KW-0002">3D-structure</keyword>
<keyword id="KW-0010">Activator</keyword>
<keyword id="KW-0217">Developmental protein</keyword>
<keyword id="KW-0221">Differentiation</keyword>
<keyword id="KW-0225">Disease variant</keyword>
<keyword id="KW-0238">DNA-binding</keyword>
<keyword id="KW-0991">Intellectual disability</keyword>
<keyword id="KW-0524">Neurogenesis</keyword>
<keyword id="KW-0539">Nucleus</keyword>
<keyword id="KW-0597">Phosphoprotein</keyword>
<keyword id="KW-1267">Proteomics identification</keyword>
<keyword id="KW-1185">Reference proteome</keyword>
<keyword id="KW-0804">Transcription</keyword>
<keyword id="KW-0805">Transcription regulation</keyword>
<sequence>MVQQAESLEAESNLPREALDTEEGEFMACSPVALDESDPDWCKTASGHIKRPMNAFMVWSKIERRKIMEQSPDMHNAEISKRLGKRWKMLKDSEKIPFIREAERLRLKHMADYPDYKYRPRKKPKMDPSAKPSASQSPEKSAAGGGGGSAGGGAGGAKTSKGSSKKCGKLKAPAAAGAKAGAGKAAQSGDYGGAGDDYVLGSLRVSGSGGGGAGKTVKCVFLDEDDDDDDDDDELQLQIKQEPDEEDEEPPHQQLLQPPGQQPSQLLRRYNVAKVPASPTLSSSAESPEGASLYDEVRAGATSGAGGGSRLYYSFKNITKQHPPPLAQPALSPASSRSVSTSSSSSSGSSSGSSGEDADDLMFDLSLNFSQSAHSASEQQLGGGAAAGNLSLSLVDKDLDSFSEGSLGSHFEFPDYCTPELSEMIAGDWLEANFSDLVFTY</sequence>
<evidence type="ECO:0000250" key="1">
    <source>
        <dbReference type="UniProtKB" id="Q7M6Y2"/>
    </source>
</evidence>
<evidence type="ECO:0000255" key="2">
    <source>
        <dbReference type="PROSITE-ProRule" id="PRU00267"/>
    </source>
</evidence>
<evidence type="ECO:0000256" key="3">
    <source>
        <dbReference type="SAM" id="MobiDB-lite"/>
    </source>
</evidence>
<evidence type="ECO:0000269" key="4">
    <source>
    </source>
</evidence>
<evidence type="ECO:0000269" key="5">
    <source>
    </source>
</evidence>
<evidence type="ECO:0000269" key="6">
    <source>
    </source>
</evidence>
<evidence type="ECO:0000269" key="7">
    <source>
    </source>
</evidence>
<evidence type="ECO:0000269" key="8">
    <source>
    </source>
</evidence>
<evidence type="ECO:0000269" key="9">
    <source>
    </source>
</evidence>
<evidence type="ECO:0000269" key="10">
    <source>
    </source>
</evidence>
<evidence type="ECO:0000269" key="11">
    <source>
    </source>
</evidence>
<evidence type="ECO:0000269" key="12">
    <source>
    </source>
</evidence>
<evidence type="ECO:0007744" key="13">
    <source>
    </source>
</evidence>
<evidence type="ECO:0007829" key="14">
    <source>
        <dbReference type="PDB" id="6T78"/>
    </source>
</evidence>
<proteinExistence type="evidence at protein level"/>
<reference key="1">
    <citation type="journal article" date="1995" name="Genomics">
        <title>The human SOX11 gene: cloning, chromosomal assignment and tissue expression.</title>
        <authorList>
            <person name="Jay P."/>
            <person name="Goze C."/>
            <person name="Marsollier C."/>
            <person name="Taviaux S."/>
            <person name="Hardelin J.-P."/>
            <person name="Koopman P."/>
            <person name="Berta P."/>
        </authorList>
    </citation>
    <scope>NUCLEOTIDE SEQUENCE [MRNA]</scope>
    <scope>DEVELOPMENTAL STAGE</scope>
    <source>
        <tissue>Fetal brain</tissue>
    </source>
</reference>
<reference key="2">
    <citation type="journal article" date="1999" name="DNA Res.">
        <title>Human SOX11, an upregulated gene during the neural differentiation, has a long 3' untranslated region.</title>
        <authorList>
            <person name="Azuma T."/>
            <person name="Ao S."/>
            <person name="Saito Y."/>
            <person name="Yano K."/>
            <person name="Seki N."/>
            <person name="Wakao H."/>
            <person name="Masuho Y."/>
            <person name="Muramatsu M."/>
        </authorList>
    </citation>
    <scope>NUCLEOTIDE SEQUENCE [MRNA]</scope>
    <source>
        <tissue>Neuroepithelium</tissue>
    </source>
</reference>
<reference key="3">
    <citation type="journal article" date="2005" name="Nature">
        <title>Generation and annotation of the DNA sequences of human chromosomes 2 and 4.</title>
        <authorList>
            <person name="Hillier L.W."/>
            <person name="Graves T.A."/>
            <person name="Fulton R.S."/>
            <person name="Fulton L.A."/>
            <person name="Pepin K.H."/>
            <person name="Minx P."/>
            <person name="Wagner-McPherson C."/>
            <person name="Layman D."/>
            <person name="Wylie K."/>
            <person name="Sekhon M."/>
            <person name="Becker M.C."/>
            <person name="Fewell G.A."/>
            <person name="Delehaunty K.D."/>
            <person name="Miner T.L."/>
            <person name="Nash W.E."/>
            <person name="Kremitzki C."/>
            <person name="Oddy L."/>
            <person name="Du H."/>
            <person name="Sun H."/>
            <person name="Bradshaw-Cordum H."/>
            <person name="Ali J."/>
            <person name="Carter J."/>
            <person name="Cordes M."/>
            <person name="Harris A."/>
            <person name="Isak A."/>
            <person name="van Brunt A."/>
            <person name="Nguyen C."/>
            <person name="Du F."/>
            <person name="Courtney L."/>
            <person name="Kalicki J."/>
            <person name="Ozersky P."/>
            <person name="Abbott S."/>
            <person name="Armstrong J."/>
            <person name="Belter E.A."/>
            <person name="Caruso L."/>
            <person name="Cedroni M."/>
            <person name="Cotton M."/>
            <person name="Davidson T."/>
            <person name="Desai A."/>
            <person name="Elliott G."/>
            <person name="Erb T."/>
            <person name="Fronick C."/>
            <person name="Gaige T."/>
            <person name="Haakenson W."/>
            <person name="Haglund K."/>
            <person name="Holmes A."/>
            <person name="Harkins R."/>
            <person name="Kim K."/>
            <person name="Kruchowski S.S."/>
            <person name="Strong C.M."/>
            <person name="Grewal N."/>
            <person name="Goyea E."/>
            <person name="Hou S."/>
            <person name="Levy A."/>
            <person name="Martinka S."/>
            <person name="Mead K."/>
            <person name="McLellan M.D."/>
            <person name="Meyer R."/>
            <person name="Randall-Maher J."/>
            <person name="Tomlinson C."/>
            <person name="Dauphin-Kohlberg S."/>
            <person name="Kozlowicz-Reilly A."/>
            <person name="Shah N."/>
            <person name="Swearengen-Shahid S."/>
            <person name="Snider J."/>
            <person name="Strong J.T."/>
            <person name="Thompson J."/>
            <person name="Yoakum M."/>
            <person name="Leonard S."/>
            <person name="Pearman C."/>
            <person name="Trani L."/>
            <person name="Radionenko M."/>
            <person name="Waligorski J.E."/>
            <person name="Wang C."/>
            <person name="Rock S.M."/>
            <person name="Tin-Wollam A.-M."/>
            <person name="Maupin R."/>
            <person name="Latreille P."/>
            <person name="Wendl M.C."/>
            <person name="Yang S.-P."/>
            <person name="Pohl C."/>
            <person name="Wallis J.W."/>
            <person name="Spieth J."/>
            <person name="Bieri T.A."/>
            <person name="Berkowicz N."/>
            <person name="Nelson J.O."/>
            <person name="Osborne J."/>
            <person name="Ding L."/>
            <person name="Meyer R."/>
            <person name="Sabo A."/>
            <person name="Shotland Y."/>
            <person name="Sinha P."/>
            <person name="Wohldmann P.E."/>
            <person name="Cook L.L."/>
            <person name="Hickenbotham M.T."/>
            <person name="Eldred J."/>
            <person name="Williams D."/>
            <person name="Jones T.A."/>
            <person name="She X."/>
            <person name="Ciccarelli F.D."/>
            <person name="Izaurralde E."/>
            <person name="Taylor J."/>
            <person name="Schmutz J."/>
            <person name="Myers R.M."/>
            <person name="Cox D.R."/>
            <person name="Huang X."/>
            <person name="McPherson J.D."/>
            <person name="Mardis E.R."/>
            <person name="Clifton S.W."/>
            <person name="Warren W.C."/>
            <person name="Chinwalla A.T."/>
            <person name="Eddy S.R."/>
            <person name="Marra M.A."/>
            <person name="Ovcharenko I."/>
            <person name="Furey T.S."/>
            <person name="Miller W."/>
            <person name="Eichler E.E."/>
            <person name="Bork P."/>
            <person name="Suyama M."/>
            <person name="Torrents D."/>
            <person name="Waterston R.H."/>
            <person name="Wilson R.K."/>
        </authorList>
    </citation>
    <scope>NUCLEOTIDE SEQUENCE [LARGE SCALE GENOMIC DNA]</scope>
</reference>
<reference key="4">
    <citation type="journal article" date="1993" name="Nucleic Acids Res.">
        <title>Partial cloning of SOX-11 and SOX-12, two new human SOX genes.</title>
        <authorList>
            <person name="Goze C."/>
            <person name="Poulat F."/>
            <person name="Berta P."/>
        </authorList>
    </citation>
    <scope>NUCLEOTIDE SEQUENCE [GENOMIC DNA] OF 57-115</scope>
</reference>
<reference key="5">
    <citation type="journal article" date="2008" name="Proc. Natl. Acad. Sci. U.S.A.">
        <title>A quantitative atlas of mitotic phosphorylation.</title>
        <authorList>
            <person name="Dephoure N."/>
            <person name="Zhou C."/>
            <person name="Villen J."/>
            <person name="Beausoleil S.A."/>
            <person name="Bakalarski C.E."/>
            <person name="Elledge S.J."/>
            <person name="Gygi S.P."/>
        </authorList>
    </citation>
    <scope>PHOSPHORYLATION [LARGE SCALE ANALYSIS] AT SER-206</scope>
    <scope>IDENTIFICATION BY MASS SPECTROMETRY [LARGE SCALE ANALYSIS]</scope>
    <source>
        <tissue>Cervix carcinoma</tissue>
    </source>
</reference>
<reference key="6">
    <citation type="journal article" date="2014" name="Nat. Commun.">
        <title>De novo SOX11 mutations cause Coffin-Siris syndrome.</title>
        <authorList>
            <person name="Tsurusaki Y."/>
            <person name="Koshimizu E."/>
            <person name="Ohashi H."/>
            <person name="Phadke S."/>
            <person name="Kou I."/>
            <person name="Shiina M."/>
            <person name="Suzuki T."/>
            <person name="Okamoto N."/>
            <person name="Imamura S."/>
            <person name="Yamashita M."/>
            <person name="Watanabe S."/>
            <person name="Yoshiura K."/>
            <person name="Kodera H."/>
            <person name="Miyatake S."/>
            <person name="Nakashima M."/>
            <person name="Saitsu H."/>
            <person name="Ogata K."/>
            <person name="Ikegawa S."/>
            <person name="Miyake N."/>
            <person name="Matsumoto N."/>
        </authorList>
    </citation>
    <scope>FUNCTION</scope>
    <scope>SUBCELLULAR LOCATION</scope>
    <scope>DEVELOPMENTAL STAGE</scope>
    <scope>TISSUE SPECIFICITY</scope>
    <scope>VARIANTS IDDMOH PRO-60 AND CYS-116</scope>
    <scope>CHARACTERIZATION OF VARIANTS IDDMOH PRO-60 AND CYS-116</scope>
</reference>
<reference key="7">
    <citation type="journal article" date="2016" name="J. Med. Genet.">
        <title>Deletions and de novo mutations of SOX11 are associated with a neurodevelopmental disorder with features of Coffin-Siris syndrome.</title>
        <authorList>
            <consortium name="DDD Collaboration"/>
            <person name="Hempel A."/>
            <person name="Pagnamenta A.T."/>
            <person name="Blyth M."/>
            <person name="Mansour S."/>
            <person name="McConnell V."/>
            <person name="Kou I."/>
            <person name="Ikegawa S."/>
            <person name="Tsurusaki Y."/>
            <person name="Matsumoto N."/>
            <person name="Lo-Castro A."/>
            <person name="Plessis G."/>
            <person name="Albrecht B."/>
            <person name="Battaglia A."/>
            <person name="Taylor J.C."/>
            <person name="Howard M.F."/>
            <person name="Keays D."/>
            <person name="Sohal A.S."/>
            <person name="Kuehl S.J."/>
            <person name="Kini U."/>
            <person name="McNeill A."/>
        </authorList>
    </citation>
    <scope>VARIANTS IDDMOH 29-CYS--TYR-441 DEL; ASN-50 AND HIS-120</scope>
    <scope>CHARACTERIZATION OF VARIANTS IDDMOH ASN-50 AND HIS-120</scope>
    <scope>FUNCTION</scope>
</reference>
<reference key="8">
    <citation type="journal article" date="2018" name="Congenit. Anom. (Kyoto)">
        <title>Coffin-Siris syndrome and cardiac anomaly with a novel SOX11 mutation.</title>
        <authorList>
            <person name="Okamoto N."/>
            <person name="Ehara E."/>
            <person name="Tsurusaki Y."/>
            <person name="Miyake N."/>
            <person name="Matsumoto N."/>
        </authorList>
    </citation>
    <scope>VARIANT IDDMOH VAL-102</scope>
</reference>
<reference key="9">
    <citation type="journal article" date="2021" name="Clin. Dysmorphol.">
        <title>SOX11-related syndrome: report on a new case and review.</title>
        <authorList>
            <person name="Wakim V."/>
            <person name="Nair P."/>
            <person name="Delague V."/>
            <person name="Bizzari S."/>
            <person name="Al-Ali M.T."/>
            <person name="Castro C."/>
            <person name="Gambarini A."/>
            <person name="El-Hayek S."/>
            <person name="Megarbane A."/>
        </authorList>
    </citation>
    <scope>VARIANT IDDMOH ASN-49</scope>
</reference>
<reference key="10">
    <citation type="journal article" date="2022" name="Am. J. Med. Genet. A">
        <title>Cochlear nerve deficiency in SOX11-related Coffin-Siris syndrome.</title>
        <authorList>
            <person name="Alburaiky S."/>
            <person name="Taylor J."/>
            <person name="O'Grady G."/>
            <person name="Thomson G."/>
            <person name="Perry D."/>
            <person name="England E.M."/>
            <person name="Yap P."/>
        </authorList>
    </citation>
    <scope>VARIANTS IDDMOH ASP-76 AND PRO-100</scope>
</reference>
<reference key="11">
    <citation type="journal article" date="2022" name="Eur. J. Hum. Genet.">
        <title>Maternal transmission of a mild Coffin-Siris syndrome phenotype caused by a SOX11 missense variant.</title>
        <authorList>
            <person name="Hanker B."/>
            <person name="Gillessen-Kaesbach G."/>
            <person name="Huening I."/>
            <person name="Luedecke H.J."/>
            <person name="Wieczorek D."/>
        </authorList>
    </citation>
    <scope>VARIANT IDDMOH SER-47</scope>
</reference>
<reference key="12">
    <citation type="journal article" date="2022" name="Front. Genet.">
        <title>Identification and functional analysis of novel SOX11 variants in Chinese patients with Coffin-Siris syndrome 9.</title>
        <authorList>
            <person name="Ding Y."/>
            <person name="Chen J."/>
            <person name="Tang Y."/>
            <person name="Chen L.N."/>
            <person name="Yao R.E."/>
            <person name="Yu T."/>
            <person name="Yin Y."/>
            <person name="Wang X."/>
            <person name="Wang J."/>
            <person name="Li N."/>
        </authorList>
    </citation>
    <scope>VARIANTS IDDMOH HIS-113; GLY-142 AND 274-LYS--TYR-441 DEL</scope>
    <scope>CHARACTERIZATION OF VARIANTS IDDMOH HIS-113 AND GLY-142</scope>
    <scope>SUBCELLULAR LOCATION</scope>
</reference>
<reference key="13">
    <citation type="journal article" date="2022" name="Genet. Med.">
        <title>SOX11 variants cause a neurodevelopmental disorder with infrequent ocular malformations and hypogonadotropic hypogonadism and with distinct DNA methylation profile.</title>
        <authorList>
            <consortium name="University of Washington Centre for Mendelian Genomics (UW-CMG)"/>
            <consortium name="Genomics England Research Consortium"/>
            <person name="Al-Jawahiri R."/>
            <person name="Foroutan A."/>
            <person name="Kerkhof J."/>
            <person name="McConkey H."/>
            <person name="Levy M."/>
            <person name="Haghshenas S."/>
            <person name="Rooney K."/>
            <person name="Turner J."/>
            <person name="Shears D."/>
            <person name="Holder M."/>
            <person name="Lefroy H."/>
            <person name="Castle B."/>
            <person name="Reis L.M."/>
            <person name="Semina E.V."/>
            <person name="Lachlan K."/>
            <person name="Chandler K."/>
            <person name="Wright T."/>
            <person name="Clayton-Smith J."/>
            <person name="Hug F.P."/>
            <person name="Pitteloud N."/>
            <person name="Bartoloni L."/>
            <person name="Hoffjan S."/>
            <person name="Park S.M."/>
            <person name="Thankamony A."/>
            <person name="Lees M."/>
            <person name="Wakeling E."/>
            <person name="Naik S."/>
            <person name="Hanker B."/>
            <person name="Girisha K.M."/>
            <person name="Agolini E."/>
            <person name="Giuseppe Z."/>
            <person name="Alban Z."/>
            <person name="Tessarech M."/>
            <person name="Keren B."/>
            <person name="Afenjar A."/>
            <person name="Zweier C."/>
            <person name="Reis A."/>
            <person name="Smol T."/>
            <person name="Tsurusaki Y."/>
            <person name="Nobuhiko O."/>
            <person name="Sekiguchi F."/>
            <person name="Tsuchida N."/>
            <person name="Matsumoto N."/>
            <person name="Kou I."/>
            <person name="Yonezawa Y."/>
            <person name="Ikegawa S."/>
            <person name="Callewaert B."/>
            <person name="Freeth M."/>
            <person name="Kleinendorst L."/>
            <person name="Donaldson A."/>
            <person name="Alders M."/>
            <person name="De Paepe A."/>
            <person name="Sadikovic B."/>
            <person name="McNeill A."/>
        </authorList>
    </citation>
    <scope>VARIANTS IDDMOH ASP-48; GLN-50; GLN-51; GLY-51; LEU-51; TRP-51; LEU-52; ARG-53; ILE-53; VAL-53; THR-55; LEU-56; THR-57; 59-TRP--TYR-441 DEL; CYS-64; LEU-64; PRO-64; SER-64; ASP-75; SER-84; ARG-87; LEU-98; PRO-106; PRO-109; GLU-176 AND 234-GLU--TYR-441 DEL</scope>
</reference>
<dbReference type="EMBL" id="U23752">
    <property type="protein sequence ID" value="AAB08518.1"/>
    <property type="molecule type" value="mRNA"/>
</dbReference>
<dbReference type="EMBL" id="AB028641">
    <property type="protein sequence ID" value="BAA88122.1"/>
    <property type="molecule type" value="mRNA"/>
</dbReference>
<dbReference type="EMBL" id="AC108025">
    <property type="protein sequence ID" value="AAX88930.1"/>
    <property type="molecule type" value="Genomic_DNA"/>
</dbReference>
<dbReference type="EMBL" id="X73038">
    <property type="protein sequence ID" value="CAA51519.1"/>
    <property type="molecule type" value="Genomic_DNA"/>
</dbReference>
<dbReference type="CCDS" id="CCDS1654.1"/>
<dbReference type="PIR" id="G01758">
    <property type="entry name" value="G01758"/>
</dbReference>
<dbReference type="PIR" id="S34118">
    <property type="entry name" value="S34118"/>
</dbReference>
<dbReference type="RefSeq" id="NP_003099.1">
    <property type="nucleotide sequence ID" value="NM_003108.4"/>
</dbReference>
<dbReference type="PDB" id="6T78">
    <property type="method" value="X-ray"/>
    <property type="resolution" value="2.50 A"/>
    <property type="chains" value="A/B=33-138"/>
</dbReference>
<dbReference type="PDB" id="6T7A">
    <property type="method" value="EM"/>
    <property type="resolution" value="3.70 A"/>
    <property type="chains" value="K=33-138"/>
</dbReference>
<dbReference type="PDB" id="6T7C">
    <property type="method" value="EM"/>
    <property type="resolution" value="4.00 A"/>
    <property type="chains" value="K/L=33-138"/>
</dbReference>
<dbReference type="PDB" id="6T7D">
    <property type="method" value="EM"/>
    <property type="resolution" value="4.40 A"/>
    <property type="chains" value="K=33-138"/>
</dbReference>
<dbReference type="PDBsum" id="6T78"/>
<dbReference type="PDBsum" id="6T7A"/>
<dbReference type="PDBsum" id="6T7C"/>
<dbReference type="PDBsum" id="6T7D"/>
<dbReference type="EMDB" id="EMD-10391"/>
<dbReference type="EMDB" id="EMD-10393"/>
<dbReference type="EMDB" id="EMD-10394"/>
<dbReference type="SMR" id="P35716"/>
<dbReference type="BioGRID" id="112547">
    <property type="interactions" value="7"/>
</dbReference>
<dbReference type="FunCoup" id="P35716">
    <property type="interactions" value="882"/>
</dbReference>
<dbReference type="IntAct" id="P35716">
    <property type="interactions" value="3"/>
</dbReference>
<dbReference type="STRING" id="9606.ENSP00000322568"/>
<dbReference type="GlyGen" id="P35716">
    <property type="glycosylation" value="1 site, 1 O-linked glycan (1 site)"/>
</dbReference>
<dbReference type="iPTMnet" id="P35716"/>
<dbReference type="PhosphoSitePlus" id="P35716"/>
<dbReference type="BioMuta" id="SOX11"/>
<dbReference type="DMDM" id="1351142"/>
<dbReference type="jPOST" id="P35716"/>
<dbReference type="MassIVE" id="P35716"/>
<dbReference type="PaxDb" id="9606-ENSP00000322568"/>
<dbReference type="PeptideAtlas" id="P35716"/>
<dbReference type="ProteomicsDB" id="55146"/>
<dbReference type="Pumba" id="P35716"/>
<dbReference type="Antibodypedia" id="625">
    <property type="antibodies" value="368 antibodies from 39 providers"/>
</dbReference>
<dbReference type="DNASU" id="6664"/>
<dbReference type="Ensembl" id="ENST00000322002.5">
    <property type="protein sequence ID" value="ENSP00000322568.3"/>
    <property type="gene ID" value="ENSG00000176887.7"/>
</dbReference>
<dbReference type="GeneID" id="6664"/>
<dbReference type="KEGG" id="hsa:6664"/>
<dbReference type="MANE-Select" id="ENST00000322002.5">
    <property type="protein sequence ID" value="ENSP00000322568.3"/>
    <property type="RefSeq nucleotide sequence ID" value="NM_003108.4"/>
    <property type="RefSeq protein sequence ID" value="NP_003099.1"/>
</dbReference>
<dbReference type="UCSC" id="uc002qyj.3">
    <property type="organism name" value="human"/>
</dbReference>
<dbReference type="AGR" id="HGNC:11191"/>
<dbReference type="CTD" id="6664"/>
<dbReference type="DisGeNET" id="6664"/>
<dbReference type="GeneCards" id="SOX11"/>
<dbReference type="GeneReviews" id="SOX11"/>
<dbReference type="HGNC" id="HGNC:11191">
    <property type="gene designation" value="SOX11"/>
</dbReference>
<dbReference type="HPA" id="ENSG00000176887">
    <property type="expression patterns" value="Tissue enhanced (brain)"/>
</dbReference>
<dbReference type="MalaCards" id="SOX11"/>
<dbReference type="MIM" id="600898">
    <property type="type" value="gene"/>
</dbReference>
<dbReference type="MIM" id="615866">
    <property type="type" value="phenotype"/>
</dbReference>
<dbReference type="neXtProt" id="NX_P35716"/>
<dbReference type="OpenTargets" id="ENSG00000176887"/>
<dbReference type="Orphanet" id="1465">
    <property type="disease" value="Coffin-Siris syndrome"/>
</dbReference>
<dbReference type="PharmGKB" id="PA36028"/>
<dbReference type="VEuPathDB" id="HostDB:ENSG00000176887"/>
<dbReference type="eggNOG" id="KOG0527">
    <property type="taxonomic scope" value="Eukaryota"/>
</dbReference>
<dbReference type="GeneTree" id="ENSGT00940000161652"/>
<dbReference type="HOGENOM" id="CLU_043342_0_0_1"/>
<dbReference type="InParanoid" id="P35716"/>
<dbReference type="OMA" id="VKCVFMD"/>
<dbReference type="OrthoDB" id="6247875at2759"/>
<dbReference type="PAN-GO" id="P35716">
    <property type="GO annotations" value="6 GO annotations based on evolutionary models"/>
</dbReference>
<dbReference type="PhylomeDB" id="P35716"/>
<dbReference type="TreeFam" id="TF351735"/>
<dbReference type="PathwayCommons" id="P35716"/>
<dbReference type="SignaLink" id="P35716"/>
<dbReference type="SIGNOR" id="P35716"/>
<dbReference type="BioGRID-ORCS" id="6664">
    <property type="hits" value="20 hits in 1168 CRISPR screens"/>
</dbReference>
<dbReference type="ChiTaRS" id="SOX11">
    <property type="organism name" value="human"/>
</dbReference>
<dbReference type="GeneWiki" id="SOX11"/>
<dbReference type="GenomeRNAi" id="6664"/>
<dbReference type="Pharos" id="P35716">
    <property type="development level" value="Tbio"/>
</dbReference>
<dbReference type="PRO" id="PR:P35716"/>
<dbReference type="Proteomes" id="UP000005640">
    <property type="component" value="Chromosome 2"/>
</dbReference>
<dbReference type="RNAct" id="P35716">
    <property type="molecule type" value="protein"/>
</dbReference>
<dbReference type="Bgee" id="ENSG00000176887">
    <property type="expression patterns" value="Expressed in ganglionic eminence and 74 other cell types or tissues"/>
</dbReference>
<dbReference type="GO" id="GO:0000785">
    <property type="term" value="C:chromatin"/>
    <property type="evidence" value="ECO:0000247"/>
    <property type="project" value="NTNU_SB"/>
</dbReference>
<dbReference type="GO" id="GO:0005654">
    <property type="term" value="C:nucleoplasm"/>
    <property type="evidence" value="ECO:0000314"/>
    <property type="project" value="HPA"/>
</dbReference>
<dbReference type="GO" id="GO:0005634">
    <property type="term" value="C:nucleus"/>
    <property type="evidence" value="ECO:0000314"/>
    <property type="project" value="UniProtKB"/>
</dbReference>
<dbReference type="GO" id="GO:0005886">
    <property type="term" value="C:plasma membrane"/>
    <property type="evidence" value="ECO:0000314"/>
    <property type="project" value="HPA"/>
</dbReference>
<dbReference type="GO" id="GO:0001228">
    <property type="term" value="F:DNA-binding transcription activator activity, RNA polymerase II-specific"/>
    <property type="evidence" value="ECO:0000250"/>
    <property type="project" value="UniProtKB"/>
</dbReference>
<dbReference type="GO" id="GO:0003700">
    <property type="term" value="F:DNA-binding transcription factor activity"/>
    <property type="evidence" value="ECO:0000250"/>
    <property type="project" value="UniProtKB"/>
</dbReference>
<dbReference type="GO" id="GO:0000981">
    <property type="term" value="F:DNA-binding transcription factor activity, RNA polymerase II-specific"/>
    <property type="evidence" value="ECO:0000247"/>
    <property type="project" value="NTNU_SB"/>
</dbReference>
<dbReference type="GO" id="GO:0000978">
    <property type="term" value="F:RNA polymerase II cis-regulatory region sequence-specific DNA binding"/>
    <property type="evidence" value="ECO:0000314"/>
    <property type="project" value="GO_Central"/>
</dbReference>
<dbReference type="GO" id="GO:0000976">
    <property type="term" value="F:transcription cis-regulatory region binding"/>
    <property type="evidence" value="ECO:0000250"/>
    <property type="project" value="UniProtKB"/>
</dbReference>
<dbReference type="GO" id="GO:0007420">
    <property type="term" value="P:brain development"/>
    <property type="evidence" value="ECO:0000318"/>
    <property type="project" value="GO_Central"/>
</dbReference>
<dbReference type="GO" id="GO:0048593">
    <property type="term" value="P:camera-type eye morphogenesis"/>
    <property type="evidence" value="ECO:0000318"/>
    <property type="project" value="GO_Central"/>
</dbReference>
<dbReference type="GO" id="GO:0061386">
    <property type="term" value="P:closure of optic fissure"/>
    <property type="evidence" value="ECO:0000250"/>
    <property type="project" value="UniProtKB"/>
</dbReference>
<dbReference type="GO" id="GO:0061303">
    <property type="term" value="P:cornea development in camera-type eye"/>
    <property type="evidence" value="ECO:0000250"/>
    <property type="project" value="UniProtKB"/>
</dbReference>
<dbReference type="GO" id="GO:0048557">
    <property type="term" value="P:embryonic digestive tract morphogenesis"/>
    <property type="evidence" value="ECO:0000250"/>
    <property type="project" value="UniProtKB"/>
</dbReference>
<dbReference type="GO" id="GO:0048704">
    <property type="term" value="P:embryonic skeletal system morphogenesis"/>
    <property type="evidence" value="ECO:0000250"/>
    <property type="project" value="UniProtKB"/>
</dbReference>
<dbReference type="GO" id="GO:0061029">
    <property type="term" value="P:eyelid development in camera-type eye"/>
    <property type="evidence" value="ECO:0000250"/>
    <property type="project" value="UniProtKB"/>
</dbReference>
<dbReference type="GO" id="GO:0014009">
    <property type="term" value="P:glial cell proliferation"/>
    <property type="evidence" value="ECO:0000250"/>
    <property type="project" value="UniProtKB"/>
</dbReference>
<dbReference type="GO" id="GO:0060022">
    <property type="term" value="P:hard palate development"/>
    <property type="evidence" value="ECO:0000250"/>
    <property type="project" value="UniProtKB"/>
</dbReference>
<dbReference type="GO" id="GO:0001822">
    <property type="term" value="P:kidney development"/>
    <property type="evidence" value="ECO:0007669"/>
    <property type="project" value="Ensembl"/>
</dbReference>
<dbReference type="GO" id="GO:0002089">
    <property type="term" value="P:lens morphogenesis in camera-type eye"/>
    <property type="evidence" value="ECO:0000250"/>
    <property type="project" value="UniProtKB"/>
</dbReference>
<dbReference type="GO" id="GO:0060425">
    <property type="term" value="P:lung morphogenesis"/>
    <property type="evidence" value="ECO:0000250"/>
    <property type="project" value="UniProtKB"/>
</dbReference>
<dbReference type="GO" id="GO:0010629">
    <property type="term" value="P:negative regulation of gene expression"/>
    <property type="evidence" value="ECO:0000315"/>
    <property type="project" value="UniProtKB"/>
</dbReference>
<dbReference type="GO" id="GO:0060253">
    <property type="term" value="P:negative regulation of glial cell proliferation"/>
    <property type="evidence" value="ECO:0000315"/>
    <property type="project" value="UniProtKB"/>
</dbReference>
<dbReference type="GO" id="GO:0050672">
    <property type="term" value="P:negative regulation of lymphocyte proliferation"/>
    <property type="evidence" value="ECO:0000315"/>
    <property type="project" value="UniProtKB"/>
</dbReference>
<dbReference type="GO" id="GO:0000122">
    <property type="term" value="P:negative regulation of transcription by RNA polymerase II"/>
    <property type="evidence" value="ECO:0000314"/>
    <property type="project" value="UniProtKB"/>
</dbReference>
<dbReference type="GO" id="GO:2000678">
    <property type="term" value="P:negative regulation of transcription regulatory region DNA binding"/>
    <property type="evidence" value="ECO:0000250"/>
    <property type="project" value="UniProtKB"/>
</dbReference>
<dbReference type="GO" id="GO:0007399">
    <property type="term" value="P:nervous system development"/>
    <property type="evidence" value="ECO:0000250"/>
    <property type="project" value="UniProtKB"/>
</dbReference>
<dbReference type="GO" id="GO:0060563">
    <property type="term" value="P:neuroepithelial cell differentiation"/>
    <property type="evidence" value="ECO:0000250"/>
    <property type="project" value="UniProtKB"/>
</dbReference>
<dbReference type="GO" id="GO:0030182">
    <property type="term" value="P:neuron differentiation"/>
    <property type="evidence" value="ECO:0000270"/>
    <property type="project" value="UniProtKB"/>
</dbReference>
<dbReference type="GO" id="GO:0003357">
    <property type="term" value="P:noradrenergic neuron differentiation"/>
    <property type="evidence" value="ECO:0000250"/>
    <property type="project" value="UniProtKB"/>
</dbReference>
<dbReference type="GO" id="GO:0014003">
    <property type="term" value="P:oligodendrocyte development"/>
    <property type="evidence" value="ECO:0007669"/>
    <property type="project" value="Ensembl"/>
</dbReference>
<dbReference type="GO" id="GO:0003151">
    <property type="term" value="P:outflow tract morphogenesis"/>
    <property type="evidence" value="ECO:0000250"/>
    <property type="project" value="UniProtKB"/>
</dbReference>
<dbReference type="GO" id="GO:0030513">
    <property type="term" value="P:positive regulation of BMP signaling pathway"/>
    <property type="evidence" value="ECO:0000250"/>
    <property type="project" value="UniProtKB"/>
</dbReference>
<dbReference type="GO" id="GO:0010628">
    <property type="term" value="P:positive regulation of gene expression"/>
    <property type="evidence" value="ECO:0000315"/>
    <property type="project" value="UniProtKB"/>
</dbReference>
<dbReference type="GO" id="GO:0035332">
    <property type="term" value="P:positive regulation of hippo signaling"/>
    <property type="evidence" value="ECO:0000250"/>
    <property type="project" value="UniProtKB"/>
</dbReference>
<dbReference type="GO" id="GO:0046887">
    <property type="term" value="P:positive regulation of hormone secretion"/>
    <property type="evidence" value="ECO:0000250"/>
    <property type="project" value="UniProtKB"/>
</dbReference>
<dbReference type="GO" id="GO:2001111">
    <property type="term" value="P:positive regulation of lens epithelial cell proliferation"/>
    <property type="evidence" value="ECO:0000250"/>
    <property type="project" value="UniProtKB"/>
</dbReference>
<dbReference type="GO" id="GO:0050769">
    <property type="term" value="P:positive regulation of neurogenesis"/>
    <property type="evidence" value="ECO:0000250"/>
    <property type="project" value="UniProtKB"/>
</dbReference>
<dbReference type="GO" id="GO:0045666">
    <property type="term" value="P:positive regulation of neuron differentiation"/>
    <property type="evidence" value="ECO:0000315"/>
    <property type="project" value="UniProtKB"/>
</dbReference>
<dbReference type="GO" id="GO:0045778">
    <property type="term" value="P:positive regulation of ossification"/>
    <property type="evidence" value="ECO:0000315"/>
    <property type="project" value="UniProtKB"/>
</dbReference>
<dbReference type="GO" id="GO:0045669">
    <property type="term" value="P:positive regulation of osteoblast differentiation"/>
    <property type="evidence" value="ECO:0000315"/>
    <property type="project" value="UniProtKB"/>
</dbReference>
<dbReference type="GO" id="GO:2000648">
    <property type="term" value="P:positive regulation of stem cell proliferation"/>
    <property type="evidence" value="ECO:0000315"/>
    <property type="project" value="UniProtKB"/>
</dbReference>
<dbReference type="GO" id="GO:0045944">
    <property type="term" value="P:positive regulation of transcription by RNA polymerase II"/>
    <property type="evidence" value="ECO:0000314"/>
    <property type="project" value="GO_Central"/>
</dbReference>
<dbReference type="GO" id="GO:0017015">
    <property type="term" value="P:regulation of transforming growth factor beta receptor signaling pathway"/>
    <property type="evidence" value="ECO:0000270"/>
    <property type="project" value="UniProtKB"/>
</dbReference>
<dbReference type="GO" id="GO:0035914">
    <property type="term" value="P:skeletal muscle cell differentiation"/>
    <property type="evidence" value="ECO:0007669"/>
    <property type="project" value="Ensembl"/>
</dbReference>
<dbReference type="GO" id="GO:0060023">
    <property type="term" value="P:soft palate development"/>
    <property type="evidence" value="ECO:0000250"/>
    <property type="project" value="UniProtKB"/>
</dbReference>
<dbReference type="GO" id="GO:0021510">
    <property type="term" value="P:spinal cord development"/>
    <property type="evidence" value="ECO:0000250"/>
    <property type="project" value="UniProtKB"/>
</dbReference>
<dbReference type="GO" id="GO:0048485">
    <property type="term" value="P:sympathetic nervous system development"/>
    <property type="evidence" value="ECO:0000250"/>
    <property type="project" value="UniProtKB"/>
</dbReference>
<dbReference type="GO" id="GO:0060412">
    <property type="term" value="P:ventricular septum morphogenesis"/>
    <property type="evidence" value="ECO:0000250"/>
    <property type="project" value="UniProtKB"/>
</dbReference>
<dbReference type="CDD" id="cd22037">
    <property type="entry name" value="HMG-box_SoxC_SOX11"/>
    <property type="match status" value="1"/>
</dbReference>
<dbReference type="FunFam" id="1.10.30.10:FF:000007">
    <property type="entry name" value="Transcription factor SOX"/>
    <property type="match status" value="1"/>
</dbReference>
<dbReference type="Gene3D" id="1.10.30.10">
    <property type="entry name" value="High mobility group box domain"/>
    <property type="match status" value="1"/>
</dbReference>
<dbReference type="InterPro" id="IPR009071">
    <property type="entry name" value="HMG_box_dom"/>
</dbReference>
<dbReference type="InterPro" id="IPR036910">
    <property type="entry name" value="HMG_box_dom_sf"/>
</dbReference>
<dbReference type="InterPro" id="IPR017386">
    <property type="entry name" value="SOX-12/11/4"/>
</dbReference>
<dbReference type="InterPro" id="IPR050140">
    <property type="entry name" value="SRY-related_HMG-box_TF-like"/>
</dbReference>
<dbReference type="PANTHER" id="PTHR10270">
    <property type="entry name" value="SOX TRANSCRIPTION FACTOR"/>
    <property type="match status" value="1"/>
</dbReference>
<dbReference type="PANTHER" id="PTHR10270:SF113">
    <property type="entry name" value="TRANSCRIPTION FACTOR SOX-11"/>
    <property type="match status" value="1"/>
</dbReference>
<dbReference type="Pfam" id="PF00505">
    <property type="entry name" value="HMG_box"/>
    <property type="match status" value="1"/>
</dbReference>
<dbReference type="PIRSF" id="PIRSF038098">
    <property type="entry name" value="SOX-12/11/4a"/>
    <property type="match status" value="1"/>
</dbReference>
<dbReference type="SMART" id="SM00398">
    <property type="entry name" value="HMG"/>
    <property type="match status" value="1"/>
</dbReference>
<dbReference type="SUPFAM" id="SSF47095">
    <property type="entry name" value="HMG-box"/>
    <property type="match status" value="1"/>
</dbReference>
<dbReference type="PROSITE" id="PS50118">
    <property type="entry name" value="HMG_BOX_2"/>
    <property type="match status" value="1"/>
</dbReference>